<proteinExistence type="inferred from homology"/>
<keyword id="KW-0030">Aminoacyl-tRNA synthetase</keyword>
<keyword id="KW-0067">ATP-binding</keyword>
<keyword id="KW-0963">Cytoplasm</keyword>
<keyword id="KW-0436">Ligase</keyword>
<keyword id="KW-0479">Metal-binding</keyword>
<keyword id="KW-0547">Nucleotide-binding</keyword>
<keyword id="KW-0648">Protein biosynthesis</keyword>
<keyword id="KW-1185">Reference proteome</keyword>
<keyword id="KW-0694">RNA-binding</keyword>
<keyword id="KW-0820">tRNA-binding</keyword>
<keyword id="KW-0862">Zinc</keyword>
<protein>
    <recommendedName>
        <fullName evidence="1">Methionine--tRNA ligase</fullName>
        <ecNumber evidence="1">6.1.1.10</ecNumber>
    </recommendedName>
    <alternativeName>
        <fullName evidence="1">Methionyl-tRNA synthetase</fullName>
        <shortName evidence="1">MetRS</shortName>
    </alternativeName>
</protein>
<accession>A6LFP0</accession>
<organism>
    <name type="scientific">Parabacteroides distasonis (strain ATCC 8503 / DSM 20701 / CIP 104284 / JCM 5825 / NCTC 11152)</name>
    <dbReference type="NCBI Taxonomy" id="435591"/>
    <lineage>
        <taxon>Bacteria</taxon>
        <taxon>Pseudomonadati</taxon>
        <taxon>Bacteroidota</taxon>
        <taxon>Bacteroidia</taxon>
        <taxon>Bacteroidales</taxon>
        <taxon>Tannerellaceae</taxon>
        <taxon>Parabacteroides</taxon>
    </lineage>
</organism>
<evidence type="ECO:0000255" key="1">
    <source>
        <dbReference type="HAMAP-Rule" id="MF_00098"/>
    </source>
</evidence>
<comment type="function">
    <text evidence="1">Is required not only for elongation of protein synthesis but also for the initiation of all mRNA translation through initiator tRNA(fMet) aminoacylation.</text>
</comment>
<comment type="catalytic activity">
    <reaction evidence="1">
        <text>tRNA(Met) + L-methionine + ATP = L-methionyl-tRNA(Met) + AMP + diphosphate</text>
        <dbReference type="Rhea" id="RHEA:13481"/>
        <dbReference type="Rhea" id="RHEA-COMP:9667"/>
        <dbReference type="Rhea" id="RHEA-COMP:9698"/>
        <dbReference type="ChEBI" id="CHEBI:30616"/>
        <dbReference type="ChEBI" id="CHEBI:33019"/>
        <dbReference type="ChEBI" id="CHEBI:57844"/>
        <dbReference type="ChEBI" id="CHEBI:78442"/>
        <dbReference type="ChEBI" id="CHEBI:78530"/>
        <dbReference type="ChEBI" id="CHEBI:456215"/>
        <dbReference type="EC" id="6.1.1.10"/>
    </reaction>
</comment>
<comment type="cofactor">
    <cofactor evidence="1">
        <name>Zn(2+)</name>
        <dbReference type="ChEBI" id="CHEBI:29105"/>
    </cofactor>
    <text evidence="1">Binds 1 zinc ion per subunit.</text>
</comment>
<comment type="subunit">
    <text evidence="1">Homodimer.</text>
</comment>
<comment type="subcellular location">
    <subcellularLocation>
        <location evidence="1">Cytoplasm</location>
    </subcellularLocation>
</comment>
<comment type="similarity">
    <text evidence="1">Belongs to the class-I aminoacyl-tRNA synthetase family. MetG type 1 subfamily.</text>
</comment>
<dbReference type="EC" id="6.1.1.10" evidence="1"/>
<dbReference type="EMBL" id="CP000140">
    <property type="protein sequence ID" value="ABR44504.1"/>
    <property type="molecule type" value="Genomic_DNA"/>
</dbReference>
<dbReference type="RefSeq" id="WP_011966993.1">
    <property type="nucleotide sequence ID" value="NC_009615.1"/>
</dbReference>
<dbReference type="SMR" id="A6LFP0"/>
<dbReference type="STRING" id="435591.BDI_2791"/>
<dbReference type="PaxDb" id="435591-BDI_2791"/>
<dbReference type="KEGG" id="pdi:BDI_2791"/>
<dbReference type="PATRIC" id="fig|435591.13.peg.2761"/>
<dbReference type="eggNOG" id="COG0073">
    <property type="taxonomic scope" value="Bacteria"/>
</dbReference>
<dbReference type="eggNOG" id="COG0143">
    <property type="taxonomic scope" value="Bacteria"/>
</dbReference>
<dbReference type="HOGENOM" id="CLU_009710_1_2_10"/>
<dbReference type="BioCyc" id="PDIS435591:G1G5A-2867-MONOMER"/>
<dbReference type="Proteomes" id="UP000000566">
    <property type="component" value="Chromosome"/>
</dbReference>
<dbReference type="GO" id="GO:0005829">
    <property type="term" value="C:cytosol"/>
    <property type="evidence" value="ECO:0007669"/>
    <property type="project" value="TreeGrafter"/>
</dbReference>
<dbReference type="GO" id="GO:0005524">
    <property type="term" value="F:ATP binding"/>
    <property type="evidence" value="ECO:0007669"/>
    <property type="project" value="UniProtKB-UniRule"/>
</dbReference>
<dbReference type="GO" id="GO:0046872">
    <property type="term" value="F:metal ion binding"/>
    <property type="evidence" value="ECO:0007669"/>
    <property type="project" value="UniProtKB-KW"/>
</dbReference>
<dbReference type="GO" id="GO:0004825">
    <property type="term" value="F:methionine-tRNA ligase activity"/>
    <property type="evidence" value="ECO:0007669"/>
    <property type="project" value="UniProtKB-UniRule"/>
</dbReference>
<dbReference type="GO" id="GO:0000049">
    <property type="term" value="F:tRNA binding"/>
    <property type="evidence" value="ECO:0007669"/>
    <property type="project" value="UniProtKB-KW"/>
</dbReference>
<dbReference type="GO" id="GO:0006431">
    <property type="term" value="P:methionyl-tRNA aminoacylation"/>
    <property type="evidence" value="ECO:0007669"/>
    <property type="project" value="UniProtKB-UniRule"/>
</dbReference>
<dbReference type="CDD" id="cd07957">
    <property type="entry name" value="Anticodon_Ia_Met"/>
    <property type="match status" value="1"/>
</dbReference>
<dbReference type="CDD" id="cd00814">
    <property type="entry name" value="MetRS_core"/>
    <property type="match status" value="1"/>
</dbReference>
<dbReference type="CDD" id="cd02800">
    <property type="entry name" value="tRNA_bind_EcMetRS_like"/>
    <property type="match status" value="1"/>
</dbReference>
<dbReference type="FunFam" id="1.10.730.10:FF:000030">
    <property type="entry name" value="Methionine--tRNA ligase"/>
    <property type="match status" value="1"/>
</dbReference>
<dbReference type="FunFam" id="2.20.28.20:FF:000001">
    <property type="entry name" value="Methionine--tRNA ligase"/>
    <property type="match status" value="1"/>
</dbReference>
<dbReference type="FunFam" id="2.40.50.140:FF:000042">
    <property type="entry name" value="Methionine--tRNA ligase"/>
    <property type="match status" value="1"/>
</dbReference>
<dbReference type="Gene3D" id="3.40.50.620">
    <property type="entry name" value="HUPs"/>
    <property type="match status" value="1"/>
</dbReference>
<dbReference type="Gene3D" id="1.10.730.10">
    <property type="entry name" value="Isoleucyl-tRNA Synthetase, Domain 1"/>
    <property type="match status" value="1"/>
</dbReference>
<dbReference type="Gene3D" id="2.20.28.20">
    <property type="entry name" value="Methionyl-tRNA synthetase, Zn-domain"/>
    <property type="match status" value="1"/>
</dbReference>
<dbReference type="Gene3D" id="2.40.50.140">
    <property type="entry name" value="Nucleic acid-binding proteins"/>
    <property type="match status" value="1"/>
</dbReference>
<dbReference type="HAMAP" id="MF_00098">
    <property type="entry name" value="Met_tRNA_synth_type1"/>
    <property type="match status" value="1"/>
</dbReference>
<dbReference type="InterPro" id="IPR001412">
    <property type="entry name" value="aa-tRNA-synth_I_CS"/>
</dbReference>
<dbReference type="InterPro" id="IPR041872">
    <property type="entry name" value="Anticodon_Met"/>
</dbReference>
<dbReference type="InterPro" id="IPR004495">
    <property type="entry name" value="Met-tRNA-synth_bsu_C"/>
</dbReference>
<dbReference type="InterPro" id="IPR023458">
    <property type="entry name" value="Met-tRNA_ligase_1"/>
</dbReference>
<dbReference type="InterPro" id="IPR014758">
    <property type="entry name" value="Met-tRNA_synth"/>
</dbReference>
<dbReference type="InterPro" id="IPR015413">
    <property type="entry name" value="Methionyl/Leucyl_tRNA_Synth"/>
</dbReference>
<dbReference type="InterPro" id="IPR033911">
    <property type="entry name" value="MetRS_core"/>
</dbReference>
<dbReference type="InterPro" id="IPR029038">
    <property type="entry name" value="MetRS_Zn"/>
</dbReference>
<dbReference type="InterPro" id="IPR012340">
    <property type="entry name" value="NA-bd_OB-fold"/>
</dbReference>
<dbReference type="InterPro" id="IPR014729">
    <property type="entry name" value="Rossmann-like_a/b/a_fold"/>
</dbReference>
<dbReference type="InterPro" id="IPR002547">
    <property type="entry name" value="tRNA-bd_dom"/>
</dbReference>
<dbReference type="InterPro" id="IPR009080">
    <property type="entry name" value="tRNAsynth_Ia_anticodon-bd"/>
</dbReference>
<dbReference type="NCBIfam" id="TIGR00398">
    <property type="entry name" value="metG"/>
    <property type="match status" value="1"/>
</dbReference>
<dbReference type="NCBIfam" id="TIGR00399">
    <property type="entry name" value="metG_C_term"/>
    <property type="match status" value="1"/>
</dbReference>
<dbReference type="NCBIfam" id="NF001100">
    <property type="entry name" value="PRK00133.1"/>
    <property type="match status" value="1"/>
</dbReference>
<dbReference type="PANTHER" id="PTHR45765">
    <property type="entry name" value="METHIONINE--TRNA LIGASE"/>
    <property type="match status" value="1"/>
</dbReference>
<dbReference type="PANTHER" id="PTHR45765:SF1">
    <property type="entry name" value="METHIONINE--TRNA LIGASE, CYTOPLASMIC"/>
    <property type="match status" value="1"/>
</dbReference>
<dbReference type="Pfam" id="PF19303">
    <property type="entry name" value="Anticodon_3"/>
    <property type="match status" value="1"/>
</dbReference>
<dbReference type="Pfam" id="PF09334">
    <property type="entry name" value="tRNA-synt_1g"/>
    <property type="match status" value="1"/>
</dbReference>
<dbReference type="Pfam" id="PF01588">
    <property type="entry name" value="tRNA_bind"/>
    <property type="match status" value="1"/>
</dbReference>
<dbReference type="PRINTS" id="PR01041">
    <property type="entry name" value="TRNASYNTHMET"/>
</dbReference>
<dbReference type="SUPFAM" id="SSF47323">
    <property type="entry name" value="Anticodon-binding domain of a subclass of class I aminoacyl-tRNA synthetases"/>
    <property type="match status" value="1"/>
</dbReference>
<dbReference type="SUPFAM" id="SSF57770">
    <property type="entry name" value="Methionyl-tRNA synthetase (MetRS), Zn-domain"/>
    <property type="match status" value="1"/>
</dbReference>
<dbReference type="SUPFAM" id="SSF50249">
    <property type="entry name" value="Nucleic acid-binding proteins"/>
    <property type="match status" value="1"/>
</dbReference>
<dbReference type="SUPFAM" id="SSF52374">
    <property type="entry name" value="Nucleotidylyl transferase"/>
    <property type="match status" value="1"/>
</dbReference>
<dbReference type="PROSITE" id="PS00178">
    <property type="entry name" value="AA_TRNA_LIGASE_I"/>
    <property type="match status" value="1"/>
</dbReference>
<dbReference type="PROSITE" id="PS50886">
    <property type="entry name" value="TRBD"/>
    <property type="match status" value="1"/>
</dbReference>
<sequence length="679" mass="77408">MEKHFKRTLITTALPYANGPVHIGHLAGVYVPADIYARYLRLKGEEVLMIGGSDEHGVPITLRAKKEGITPQDVVDRYHGIIKKSFEEFGITFDIYSRTTSATHHQMASDFFRTLYDKGEFIEKTSEQYYDEEAKQFLADRYIMGTCPHCGNEKAYGDQCEACGTSLSPTDLIDPKSAISGSKPVMRETKHWYLPLDKWEPFLRKWILEDHKEWKPNVYGQCKSWLDMGLQPRAVSRDLDWGIPVPVEGAEGKVLYVWFDAPIGYISNTKELLPDSWETWWKDPETKMVHFIGKDNIVFHCIVFPSMLKAEGSYNLPENVPANEFLNLEGDKISTSRNWAVWLNEYLVDMPGKQDVLRYVLTANAPETKDNDFTWKDFQARNNNELVAILGNFVNRALVLTDKYFEGKVPVAGELTDYDRQTLKDFADVKENVERLLDTYHFRDAQKEAMNLARIGNKYLADMEPWKLAKTDMPRVATIMNIALQITANLAIAFEPFLPFSMEKLNKMLNVEPLGWNRLGATDLLEAGHQLGKAELLFEKIEDSVIEAQVQKLLDTKKANEEANYKAKPIRENIEFDDFMKLDIRVGTVLECVKVPKADKLLQFRIDDGLEKRTIVSGIAQHYKPEELVGKQVCFIANLAPRKLKGIVSEGMILSAENFDGKLAVITPEKEVKPGSEVK</sequence>
<name>SYM_PARD8</name>
<gene>
    <name evidence="1" type="primary">metG</name>
    <name type="ordered locus">BDI_2791</name>
</gene>
<feature type="chain" id="PRO_0000331859" description="Methionine--tRNA ligase">
    <location>
        <begin position="1"/>
        <end position="679"/>
    </location>
</feature>
<feature type="domain" description="tRNA-binding" evidence="1">
    <location>
        <begin position="578"/>
        <end position="679"/>
    </location>
</feature>
<feature type="short sequence motif" description="'HIGH' region">
    <location>
        <begin position="15"/>
        <end position="25"/>
    </location>
</feature>
<feature type="short sequence motif" description="'KMSKS' region">
    <location>
        <begin position="332"/>
        <end position="336"/>
    </location>
</feature>
<feature type="binding site" evidence="1">
    <location>
        <position position="147"/>
    </location>
    <ligand>
        <name>Zn(2+)</name>
        <dbReference type="ChEBI" id="CHEBI:29105"/>
    </ligand>
</feature>
<feature type="binding site" evidence="1">
    <location>
        <position position="150"/>
    </location>
    <ligand>
        <name>Zn(2+)</name>
        <dbReference type="ChEBI" id="CHEBI:29105"/>
    </ligand>
</feature>
<feature type="binding site" evidence="1">
    <location>
        <position position="160"/>
    </location>
    <ligand>
        <name>Zn(2+)</name>
        <dbReference type="ChEBI" id="CHEBI:29105"/>
    </ligand>
</feature>
<feature type="binding site" evidence="1">
    <location>
        <position position="163"/>
    </location>
    <ligand>
        <name>Zn(2+)</name>
        <dbReference type="ChEBI" id="CHEBI:29105"/>
    </ligand>
</feature>
<feature type="binding site" evidence="1">
    <location>
        <position position="335"/>
    </location>
    <ligand>
        <name>ATP</name>
        <dbReference type="ChEBI" id="CHEBI:30616"/>
    </ligand>
</feature>
<reference key="1">
    <citation type="journal article" date="2007" name="PLoS Biol.">
        <title>Evolution of symbiotic bacteria in the distal human intestine.</title>
        <authorList>
            <person name="Xu J."/>
            <person name="Mahowald M.A."/>
            <person name="Ley R.E."/>
            <person name="Lozupone C.A."/>
            <person name="Hamady M."/>
            <person name="Martens E.C."/>
            <person name="Henrissat B."/>
            <person name="Coutinho P.M."/>
            <person name="Minx P."/>
            <person name="Latreille P."/>
            <person name="Cordum H."/>
            <person name="Van Brunt A."/>
            <person name="Kim K."/>
            <person name="Fulton R.S."/>
            <person name="Fulton L.A."/>
            <person name="Clifton S.W."/>
            <person name="Wilson R.K."/>
            <person name="Knight R.D."/>
            <person name="Gordon J.I."/>
        </authorList>
    </citation>
    <scope>NUCLEOTIDE SEQUENCE [LARGE SCALE GENOMIC DNA]</scope>
    <source>
        <strain>ATCC 8503 / DSM 20701 / CIP 104284 / JCM 5825 / NCTC 11152</strain>
    </source>
</reference>